<name>Y336_METJA</name>
<protein>
    <recommendedName>
        <fullName>Uncharacterized protein MJ0336</fullName>
    </recommendedName>
</protein>
<gene>
    <name type="ordered locus">MJ0336</name>
</gene>
<reference key="1">
    <citation type="journal article" date="1996" name="Science">
        <title>Complete genome sequence of the methanogenic archaeon, Methanococcus jannaschii.</title>
        <authorList>
            <person name="Bult C.J."/>
            <person name="White O."/>
            <person name="Olsen G.J."/>
            <person name="Zhou L."/>
            <person name="Fleischmann R.D."/>
            <person name="Sutton G.G."/>
            <person name="Blake J.A."/>
            <person name="FitzGerald L.M."/>
            <person name="Clayton R.A."/>
            <person name="Gocayne J.D."/>
            <person name="Kerlavage A.R."/>
            <person name="Dougherty B.A."/>
            <person name="Tomb J.-F."/>
            <person name="Adams M.D."/>
            <person name="Reich C.I."/>
            <person name="Overbeek R."/>
            <person name="Kirkness E.F."/>
            <person name="Weinstock K.G."/>
            <person name="Merrick J.M."/>
            <person name="Glodek A."/>
            <person name="Scott J.L."/>
            <person name="Geoghagen N.S.M."/>
            <person name="Weidman J.F."/>
            <person name="Fuhrmann J.L."/>
            <person name="Nguyen D."/>
            <person name="Utterback T.R."/>
            <person name="Kelley J.M."/>
            <person name="Peterson J.D."/>
            <person name="Sadow P.W."/>
            <person name="Hanna M.C."/>
            <person name="Cotton M.D."/>
            <person name="Roberts K.M."/>
            <person name="Hurst M.A."/>
            <person name="Kaine B.P."/>
            <person name="Borodovsky M."/>
            <person name="Klenk H.-P."/>
            <person name="Fraser C.M."/>
            <person name="Smith H.O."/>
            <person name="Woese C.R."/>
            <person name="Venter J.C."/>
        </authorList>
    </citation>
    <scope>NUCLEOTIDE SEQUENCE [LARGE SCALE GENOMIC DNA]</scope>
    <source>
        <strain>ATCC 43067 / DSM 2661 / JAL-1 / JCM 10045 / NBRC 100440</strain>
    </source>
</reference>
<dbReference type="EMBL" id="L77117">
    <property type="protein sequence ID" value="AAB98324.1"/>
    <property type="molecule type" value="Genomic_DNA"/>
</dbReference>
<dbReference type="PIR" id="H64341">
    <property type="entry name" value="H64341"/>
</dbReference>
<dbReference type="RefSeq" id="WP_010869834.1">
    <property type="nucleotide sequence ID" value="NC_000909.1"/>
</dbReference>
<dbReference type="FunCoup" id="Q57782">
    <property type="interactions" value="7"/>
</dbReference>
<dbReference type="STRING" id="243232.MJ_0336"/>
<dbReference type="PaxDb" id="243232-MJ_0336"/>
<dbReference type="EnsemblBacteria" id="AAB98324">
    <property type="protein sequence ID" value="AAB98324"/>
    <property type="gene ID" value="MJ_0336"/>
</dbReference>
<dbReference type="GeneID" id="1451192"/>
<dbReference type="KEGG" id="mja:MJ_0336"/>
<dbReference type="eggNOG" id="arCOG09641">
    <property type="taxonomic scope" value="Archaea"/>
</dbReference>
<dbReference type="HOGENOM" id="CLU_2056064_0_0_2"/>
<dbReference type="InParanoid" id="Q57782"/>
<dbReference type="Proteomes" id="UP000000805">
    <property type="component" value="Chromosome"/>
</dbReference>
<sequence length="119" mass="12393">MTTENIISGIAIADLAPYRFGKITSTGIGFGTSTVSDDSISIDADGVIINSRAIYTAGMYVDLKVNGVQKVEIKEGESIAPGDYVIPSTDGSGKAVKSPIKAGFKVASVEGNYCTIILR</sequence>
<keyword id="KW-1185">Reference proteome</keyword>
<accession>Q57782</accession>
<organism>
    <name type="scientific">Methanocaldococcus jannaschii (strain ATCC 43067 / DSM 2661 / JAL-1 / JCM 10045 / NBRC 100440)</name>
    <name type="common">Methanococcus jannaschii</name>
    <dbReference type="NCBI Taxonomy" id="243232"/>
    <lineage>
        <taxon>Archaea</taxon>
        <taxon>Methanobacteriati</taxon>
        <taxon>Methanobacteriota</taxon>
        <taxon>Methanomada group</taxon>
        <taxon>Methanococci</taxon>
        <taxon>Methanococcales</taxon>
        <taxon>Methanocaldococcaceae</taxon>
        <taxon>Methanocaldococcus</taxon>
    </lineage>
</organism>
<feature type="chain" id="PRO_0000106806" description="Uncharacterized protein MJ0336">
    <location>
        <begin position="1"/>
        <end position="119"/>
    </location>
</feature>
<proteinExistence type="predicted"/>